<evidence type="ECO:0000255" key="1">
    <source>
        <dbReference type="HAMAP-Rule" id="MF_00381"/>
    </source>
</evidence>
<feature type="chain" id="PRO_1000190433" description="Integration host factor subunit beta">
    <location>
        <begin position="1"/>
        <end position="102"/>
    </location>
</feature>
<dbReference type="EMBL" id="CP000628">
    <property type="protein sequence ID" value="ACM25272.1"/>
    <property type="molecule type" value="Genomic_DNA"/>
</dbReference>
<dbReference type="RefSeq" id="WP_007695350.1">
    <property type="nucleotide sequence ID" value="NC_011985.1"/>
</dbReference>
<dbReference type="SMR" id="B9J885"/>
<dbReference type="STRING" id="311403.Arad_0625"/>
<dbReference type="KEGG" id="ara:Arad_0625"/>
<dbReference type="eggNOG" id="COG0776">
    <property type="taxonomic scope" value="Bacteria"/>
</dbReference>
<dbReference type="HOGENOM" id="CLU_105066_2_1_5"/>
<dbReference type="Proteomes" id="UP000001600">
    <property type="component" value="Chromosome 1"/>
</dbReference>
<dbReference type="GO" id="GO:0005694">
    <property type="term" value="C:chromosome"/>
    <property type="evidence" value="ECO:0007669"/>
    <property type="project" value="InterPro"/>
</dbReference>
<dbReference type="GO" id="GO:0005829">
    <property type="term" value="C:cytosol"/>
    <property type="evidence" value="ECO:0007669"/>
    <property type="project" value="TreeGrafter"/>
</dbReference>
<dbReference type="GO" id="GO:0003677">
    <property type="term" value="F:DNA binding"/>
    <property type="evidence" value="ECO:0007669"/>
    <property type="project" value="UniProtKB-UniRule"/>
</dbReference>
<dbReference type="GO" id="GO:0030527">
    <property type="term" value="F:structural constituent of chromatin"/>
    <property type="evidence" value="ECO:0007669"/>
    <property type="project" value="InterPro"/>
</dbReference>
<dbReference type="GO" id="GO:0006310">
    <property type="term" value="P:DNA recombination"/>
    <property type="evidence" value="ECO:0007669"/>
    <property type="project" value="UniProtKB-UniRule"/>
</dbReference>
<dbReference type="GO" id="GO:0006355">
    <property type="term" value="P:regulation of DNA-templated transcription"/>
    <property type="evidence" value="ECO:0007669"/>
    <property type="project" value="UniProtKB-UniRule"/>
</dbReference>
<dbReference type="GO" id="GO:0006417">
    <property type="term" value="P:regulation of translation"/>
    <property type="evidence" value="ECO:0007669"/>
    <property type="project" value="UniProtKB-UniRule"/>
</dbReference>
<dbReference type="CDD" id="cd13836">
    <property type="entry name" value="IHF_B"/>
    <property type="match status" value="1"/>
</dbReference>
<dbReference type="Gene3D" id="4.10.520.10">
    <property type="entry name" value="IHF-like DNA-binding proteins"/>
    <property type="match status" value="1"/>
</dbReference>
<dbReference type="HAMAP" id="MF_00381">
    <property type="entry name" value="IHF_beta"/>
    <property type="match status" value="1"/>
</dbReference>
<dbReference type="InterPro" id="IPR000119">
    <property type="entry name" value="Hist_DNA-bd"/>
</dbReference>
<dbReference type="InterPro" id="IPR020816">
    <property type="entry name" value="Histone-like_DNA-bd_CS"/>
</dbReference>
<dbReference type="InterPro" id="IPR010992">
    <property type="entry name" value="IHF-like_DNA-bd_dom_sf"/>
</dbReference>
<dbReference type="InterPro" id="IPR005685">
    <property type="entry name" value="IHF_beta"/>
</dbReference>
<dbReference type="NCBIfam" id="TIGR00988">
    <property type="entry name" value="hip"/>
    <property type="match status" value="1"/>
</dbReference>
<dbReference type="NCBIfam" id="NF001222">
    <property type="entry name" value="PRK00199.1"/>
    <property type="match status" value="1"/>
</dbReference>
<dbReference type="PANTHER" id="PTHR33175">
    <property type="entry name" value="DNA-BINDING PROTEIN HU"/>
    <property type="match status" value="1"/>
</dbReference>
<dbReference type="PANTHER" id="PTHR33175:SF5">
    <property type="entry name" value="INTEGRATION HOST FACTOR SUBUNIT BETA"/>
    <property type="match status" value="1"/>
</dbReference>
<dbReference type="Pfam" id="PF00216">
    <property type="entry name" value="Bac_DNA_binding"/>
    <property type="match status" value="1"/>
</dbReference>
<dbReference type="PRINTS" id="PR01727">
    <property type="entry name" value="DNABINDINGHU"/>
</dbReference>
<dbReference type="SMART" id="SM00411">
    <property type="entry name" value="BHL"/>
    <property type="match status" value="1"/>
</dbReference>
<dbReference type="SUPFAM" id="SSF47729">
    <property type="entry name" value="IHF-like DNA-binding proteins"/>
    <property type="match status" value="1"/>
</dbReference>
<dbReference type="PROSITE" id="PS00045">
    <property type="entry name" value="HISTONE_LIKE"/>
    <property type="match status" value="1"/>
</dbReference>
<organism>
    <name type="scientific">Rhizobium rhizogenes (strain K84 / ATCC BAA-868)</name>
    <name type="common">Agrobacterium radiobacter</name>
    <dbReference type="NCBI Taxonomy" id="311403"/>
    <lineage>
        <taxon>Bacteria</taxon>
        <taxon>Pseudomonadati</taxon>
        <taxon>Pseudomonadota</taxon>
        <taxon>Alphaproteobacteria</taxon>
        <taxon>Hyphomicrobiales</taxon>
        <taxon>Rhizobiaceae</taxon>
        <taxon>Rhizobium/Agrobacterium group</taxon>
        <taxon>Rhizobium</taxon>
    </lineage>
</organism>
<comment type="function">
    <text evidence="1">This protein is one of the two subunits of integration host factor, a specific DNA-binding protein that functions in genetic recombination as well as in transcriptional and translational control.</text>
</comment>
<comment type="subunit">
    <text evidence="1">Heterodimer of an alpha and a beta chain.</text>
</comment>
<comment type="similarity">
    <text evidence="1">Belongs to the bacterial histone-like protein family.</text>
</comment>
<proteinExistence type="inferred from homology"/>
<reference key="1">
    <citation type="journal article" date="2009" name="J. Bacteriol.">
        <title>Genome sequences of three Agrobacterium biovars help elucidate the evolution of multichromosome genomes in bacteria.</title>
        <authorList>
            <person name="Slater S.C."/>
            <person name="Goldman B.S."/>
            <person name="Goodner B."/>
            <person name="Setubal J.C."/>
            <person name="Farrand S.K."/>
            <person name="Nester E.W."/>
            <person name="Burr T.J."/>
            <person name="Banta L."/>
            <person name="Dickerman A.W."/>
            <person name="Paulsen I."/>
            <person name="Otten L."/>
            <person name="Suen G."/>
            <person name="Welch R."/>
            <person name="Almeida N.F."/>
            <person name="Arnold F."/>
            <person name="Burton O.T."/>
            <person name="Du Z."/>
            <person name="Ewing A."/>
            <person name="Godsy E."/>
            <person name="Heisel S."/>
            <person name="Houmiel K.L."/>
            <person name="Jhaveri J."/>
            <person name="Lu J."/>
            <person name="Miller N.M."/>
            <person name="Norton S."/>
            <person name="Chen Q."/>
            <person name="Phoolcharoen W."/>
            <person name="Ohlin V."/>
            <person name="Ondrusek D."/>
            <person name="Pride N."/>
            <person name="Stricklin S.L."/>
            <person name="Sun J."/>
            <person name="Wheeler C."/>
            <person name="Wilson L."/>
            <person name="Zhu H."/>
            <person name="Wood D.W."/>
        </authorList>
    </citation>
    <scope>NUCLEOTIDE SEQUENCE [LARGE SCALE GENOMIC DNA]</scope>
    <source>
        <strain>K84 / ATCC BAA-868</strain>
    </source>
</reference>
<keyword id="KW-0233">DNA recombination</keyword>
<keyword id="KW-0238">DNA-binding</keyword>
<keyword id="KW-0804">Transcription</keyword>
<keyword id="KW-0805">Transcription regulation</keyword>
<keyword id="KW-0810">Translation regulation</keyword>
<accession>B9J885</accession>
<gene>
    <name evidence="1" type="primary">ihfB</name>
    <name evidence="1" type="synonym">himD</name>
    <name type="ordered locus">Arad_0625</name>
</gene>
<protein>
    <recommendedName>
        <fullName evidence="1">Integration host factor subunit beta</fullName>
        <shortName evidence="1">IHF-beta</shortName>
    </recommendedName>
</protein>
<sequence>MIKSELVQIVAARNPHLYHRDVENIVNAVLDEITDALAAGNRVELRGFGAFSVKNRPSRSGRNPRTGDTVFVEEKWVPFFKTGKELRERLNPGAGDEDDDDN</sequence>
<name>IHFB_RHIR8</name>